<sequence>MIVLFVDFDYFYAQVEEVLNPSLKGKPVVVCVFSGRFEDSGAVATANYEARKFGVKAGIPIVEAKKILPNAVYLPMRKEVYQQVSSRIMNLLREYSEKIEIASIDEAYLDISDKVRDYREAYNLGLEIKNKILEKEKITVTVGISKNKVFAKIAADMAKPNGIKVIDDEEVKRLIRELDIADVPGIGNITAEKLKKLGINKLVDTLSIEFDKLKGMIGEAKAKYLISLARDEYNEPIRTRVRKSIGRIVTMKRNSRNLEEIKPYLFRAIEESYYKLDKRIPKAIHVVAVTEDLDIVSRGRTFPHGISKETAYSESVKLLQKILEEDERKIRRIGVRFSKFIEAIGLDKFFDT</sequence>
<proteinExistence type="evidence at protein level"/>
<protein>
    <recommendedName>
        <fullName>DNA polymerase IV</fullName>
        <shortName>Pol IV</shortName>
        <ecNumber>2.7.7.7</ecNumber>
    </recommendedName>
</protein>
<reference key="1">
    <citation type="journal article" date="2001" name="Proc. Natl. Acad. Sci. U.S.A.">
        <title>The complete genome of the crenarchaeon Sulfolobus solfataricus P2.</title>
        <authorList>
            <person name="She Q."/>
            <person name="Singh R.K."/>
            <person name="Confalonieri F."/>
            <person name="Zivanovic Y."/>
            <person name="Allard G."/>
            <person name="Awayez M.J."/>
            <person name="Chan-Weiher C.C.-Y."/>
            <person name="Clausen I.G."/>
            <person name="Curtis B.A."/>
            <person name="De Moors A."/>
            <person name="Erauso G."/>
            <person name="Fletcher C."/>
            <person name="Gordon P.M.K."/>
            <person name="Heikamp-de Jong I."/>
            <person name="Jeffries A.C."/>
            <person name="Kozera C.J."/>
            <person name="Medina N."/>
            <person name="Peng X."/>
            <person name="Thi-Ngoc H.P."/>
            <person name="Redder P."/>
            <person name="Schenk M.E."/>
            <person name="Theriault C."/>
            <person name="Tolstrup N."/>
            <person name="Charlebois R.L."/>
            <person name="Doolittle W.F."/>
            <person name="Duguet M."/>
            <person name="Gaasterland T."/>
            <person name="Garrett R.A."/>
            <person name="Ragan M.A."/>
            <person name="Sensen C.W."/>
            <person name="Van der Oost J."/>
        </authorList>
    </citation>
    <scope>NUCLEOTIDE SEQUENCE [LARGE SCALE GENOMIC DNA]</scope>
    <source>
        <strain>ATCC 35092 / DSM 1617 / JCM 11322 / P2</strain>
    </source>
</reference>
<reference key="2">
    <citation type="journal article" date="2001" name="Nucleic Acids Res.">
        <title>Sulfolobus solfataricus P2 DNA polymerase IV (Dpo4): an archaeal DinB-like DNA polymerase with lesion-bypass properties akin to eukaryotic pol eta.</title>
        <authorList>
            <person name="Boudsocq F."/>
            <person name="Iwai S."/>
            <person name="Hanaoka F."/>
            <person name="Woodgate R."/>
        </authorList>
    </citation>
    <scope>CHARACTERIZATION</scope>
    <source>
        <strain>ATCC 35092 / DSM 1617 / JCM 11322 / P2</strain>
    </source>
</reference>
<reference key="3">
    <citation type="journal article" date="2002" name="J. Biol. Chem.">
        <title>Low fidelity DNA synthesis by a Y family DNA polymerase due to misalignment in the active site.</title>
        <authorList>
            <person name="Kokoska R.J."/>
            <person name="Bebenek K."/>
            <person name="Boudsocq F."/>
            <person name="Woodgate R."/>
            <person name="Kunkel T.A."/>
        </authorList>
    </citation>
    <scope>CHARACTERIZATION</scope>
    <source>
        <strain>ATCC 35092 / DSM 1617 / JCM 11322 / P2</strain>
    </source>
</reference>
<reference key="4">
    <citation type="journal article" date="2001" name="Cell">
        <title>Crystal structure of a Y-family DNA polymerase in action: a mechanism for error-prone and lesion-bypass replication.</title>
        <authorList>
            <person name="Ling H."/>
            <person name="Boudsocq F."/>
            <person name="Woodgate R."/>
            <person name="Yang W."/>
        </authorList>
    </citation>
    <scope>X-RAY CRYSTALLOGRAPHY (1.7 ANGSTROMS) OF TERNARY COMPLEX WITH DNA AND AN INCOMING NUCLEOTIDE</scope>
    <scope>MUTAGENESIS OF 105-ASP-GLU-106</scope>
    <source>
        <strain>ATCC 35092 / DSM 1617 / JCM 11322 / P2</strain>
    </source>
</reference>
<reference key="5">
    <citation type="journal article" date="2009" name="Mol. Microbiol.">
        <title>Structural insight into recruitment of translesion DNA polymerase Dpo4 to sliding clamp PCNA.</title>
        <authorList>
            <person name="Xing G."/>
            <person name="Kirouac K."/>
            <person name="Shin Y.J."/>
            <person name="Bell S.D."/>
            <person name="Ling H."/>
        </authorList>
    </citation>
    <scope>X-RAY CRYSTALLOGRAPHY (2.05 ANGSTROMS) OF 1-244 IN COMPLEX WITH PCNA</scope>
    <scope>INTERACTION WITH PCNA1</scope>
    <scope>SUBUNIT</scope>
    <scope>DNA-BINDING</scope>
    <scope>MUTAGENESIS OF 342-GLU--THR-352</scope>
</reference>
<accession>Q97W02</accession>
<comment type="function">
    <text>Poorly processive, error-prone DNA polymerase involved in untargeted mutagenesis. Copies undamaged DNA at stalled replication forks, which arise in vivo from mismatched or misaligned primer ends. These misaligned primers can be extended by PolIV. Exhibits no 3'-5' exonuclease (proofreading) activity. It is involved in translesional synthesis.</text>
</comment>
<comment type="catalytic activity">
    <reaction>
        <text>DNA(n) + a 2'-deoxyribonucleoside 5'-triphosphate = DNA(n+1) + diphosphate</text>
        <dbReference type="Rhea" id="RHEA:22508"/>
        <dbReference type="Rhea" id="RHEA-COMP:17339"/>
        <dbReference type="Rhea" id="RHEA-COMP:17340"/>
        <dbReference type="ChEBI" id="CHEBI:33019"/>
        <dbReference type="ChEBI" id="CHEBI:61560"/>
        <dbReference type="ChEBI" id="CHEBI:173112"/>
        <dbReference type="EC" id="2.7.7.7"/>
    </reaction>
</comment>
<comment type="cofactor">
    <cofactor>
        <name>Mg(2+)</name>
        <dbReference type="ChEBI" id="CHEBI:18420"/>
    </cofactor>
    <text>Binds 2 magnesium ions per subunit.</text>
</comment>
<comment type="biophysicochemical properties">
    <temperatureDependence>
        <text>Highly active from 35 to 95 degrees Celsius. Thermostable.</text>
    </temperatureDependence>
</comment>
<comment type="subunit">
    <text evidence="2">Monomer. Interacts with the PCNA heterotrimer via PCNA1.</text>
</comment>
<comment type="subcellular location">
    <subcellularLocation>
        <location evidence="3">Cytoplasm</location>
    </subcellularLocation>
</comment>
<comment type="domain">
    <text>The catalytic core consists of fingers, palm and thumb subdomains, but the fingers and thumb subdomains are much smaller than in high-fidelity polymerases; residues from five sequence motifs of the Y-family cluster around an active site cleft that can accommodate DNA and nucleotide substrates with relaxed geometric constraints, with consequently higher rates of misincorporation and low processivity.</text>
</comment>
<comment type="similarity">
    <text evidence="3">Belongs to the DNA polymerase type-Y family.</text>
</comment>
<dbReference type="EC" id="2.7.7.7"/>
<dbReference type="EMBL" id="AE006641">
    <property type="protein sequence ID" value="AAK42588.1"/>
    <property type="molecule type" value="Genomic_DNA"/>
</dbReference>
<dbReference type="PIR" id="E90416">
    <property type="entry name" value="E90416"/>
</dbReference>
<dbReference type="RefSeq" id="WP_009993137.1">
    <property type="nucleotide sequence ID" value="NC_002754.1"/>
</dbReference>
<dbReference type="PDB" id="1JX4">
    <property type="method" value="X-ray"/>
    <property type="resolution" value="1.70 A"/>
    <property type="chains" value="A=1-352"/>
</dbReference>
<dbReference type="PDB" id="1JXL">
    <property type="method" value="X-ray"/>
    <property type="resolution" value="2.10 A"/>
    <property type="chains" value="A=1-352"/>
</dbReference>
<dbReference type="PDB" id="1N48">
    <property type="method" value="X-ray"/>
    <property type="resolution" value="2.20 A"/>
    <property type="chains" value="A=1-352"/>
</dbReference>
<dbReference type="PDB" id="1N56">
    <property type="method" value="X-ray"/>
    <property type="resolution" value="2.40 A"/>
    <property type="chains" value="A/B=1-352"/>
</dbReference>
<dbReference type="PDB" id="1RYR">
    <property type="method" value="X-ray"/>
    <property type="resolution" value="2.28 A"/>
    <property type="chains" value="A=1-352"/>
</dbReference>
<dbReference type="PDB" id="1RYS">
    <property type="method" value="X-ray"/>
    <property type="resolution" value="2.03 A"/>
    <property type="chains" value="A/B=1-352"/>
</dbReference>
<dbReference type="PDB" id="1S0M">
    <property type="method" value="X-ray"/>
    <property type="resolution" value="2.70 A"/>
    <property type="chains" value="A/B=1-352"/>
</dbReference>
<dbReference type="PDB" id="1S0N">
    <property type="method" value="X-ray"/>
    <property type="resolution" value="2.80 A"/>
    <property type="chains" value="A=1-352"/>
</dbReference>
<dbReference type="PDB" id="1S0O">
    <property type="method" value="X-ray"/>
    <property type="resolution" value="2.10 A"/>
    <property type="chains" value="A/B=1-352"/>
</dbReference>
<dbReference type="PDB" id="1S10">
    <property type="method" value="X-ray"/>
    <property type="resolution" value="2.10 A"/>
    <property type="chains" value="A=1-352"/>
</dbReference>
<dbReference type="PDB" id="1S97">
    <property type="method" value="X-ray"/>
    <property type="resolution" value="2.40 A"/>
    <property type="chains" value="A/B/C/D=1-352"/>
</dbReference>
<dbReference type="PDB" id="1S9F">
    <property type="method" value="X-ray"/>
    <property type="resolution" value="2.00 A"/>
    <property type="chains" value="A/B/C/D=1-352"/>
</dbReference>
<dbReference type="PDB" id="2AGO">
    <property type="method" value="X-ray"/>
    <property type="resolution" value="2.85 A"/>
    <property type="chains" value="A=1-341"/>
</dbReference>
<dbReference type="PDB" id="2AGP">
    <property type="method" value="X-ray"/>
    <property type="resolution" value="2.90 A"/>
    <property type="chains" value="A/B=1-341"/>
</dbReference>
<dbReference type="PDB" id="2AGQ">
    <property type="method" value="X-ray"/>
    <property type="resolution" value="2.10 A"/>
    <property type="chains" value="A=1-341"/>
</dbReference>
<dbReference type="PDB" id="2ASD">
    <property type="method" value="X-ray"/>
    <property type="resolution" value="1.95 A"/>
    <property type="chains" value="A/B=2-352"/>
</dbReference>
<dbReference type="PDB" id="2ASJ">
    <property type="method" value="X-ray"/>
    <property type="resolution" value="2.35 A"/>
    <property type="chains" value="A/B=2-352"/>
</dbReference>
<dbReference type="PDB" id="2ASL">
    <property type="method" value="X-ray"/>
    <property type="resolution" value="2.65 A"/>
    <property type="chains" value="A/B=2-352"/>
</dbReference>
<dbReference type="PDB" id="2ATL">
    <property type="method" value="X-ray"/>
    <property type="resolution" value="2.80 A"/>
    <property type="chains" value="A/B=2-352"/>
</dbReference>
<dbReference type="PDB" id="2AU0">
    <property type="method" value="X-ray"/>
    <property type="resolution" value="2.70 A"/>
    <property type="chains" value="A/B=2-352"/>
</dbReference>
<dbReference type="PDB" id="2BQ3">
    <property type="method" value="X-ray"/>
    <property type="resolution" value="2.00 A"/>
    <property type="chains" value="A=1-352"/>
</dbReference>
<dbReference type="PDB" id="2BQR">
    <property type="method" value="X-ray"/>
    <property type="resolution" value="2.37 A"/>
    <property type="chains" value="A=1-352"/>
</dbReference>
<dbReference type="PDB" id="2BQU">
    <property type="method" value="X-ray"/>
    <property type="resolution" value="2.50 A"/>
    <property type="chains" value="A=1-352"/>
</dbReference>
<dbReference type="PDB" id="2BR0">
    <property type="method" value="X-ray"/>
    <property type="resolution" value="2.17 A"/>
    <property type="chains" value="A=1-352"/>
</dbReference>
<dbReference type="PDB" id="2C22">
    <property type="method" value="X-ray"/>
    <property type="resolution" value="2.56 A"/>
    <property type="chains" value="A=1-352"/>
</dbReference>
<dbReference type="PDB" id="2C28">
    <property type="method" value="X-ray"/>
    <property type="resolution" value="2.27 A"/>
    <property type="chains" value="A=1-352"/>
</dbReference>
<dbReference type="PDB" id="2C2D">
    <property type="method" value="X-ray"/>
    <property type="resolution" value="2.57 A"/>
    <property type="chains" value="A=1-352"/>
</dbReference>
<dbReference type="PDB" id="2C2E">
    <property type="method" value="X-ray"/>
    <property type="resolution" value="2.61 A"/>
    <property type="chains" value="A=1-352"/>
</dbReference>
<dbReference type="PDB" id="2C2R">
    <property type="method" value="X-ray"/>
    <property type="resolution" value="2.55 A"/>
    <property type="chains" value="A=1-352"/>
</dbReference>
<dbReference type="PDB" id="2IA6">
    <property type="method" value="X-ray"/>
    <property type="resolution" value="2.50 A"/>
    <property type="chains" value="A/B=1-352"/>
</dbReference>
<dbReference type="PDB" id="2IBK">
    <property type="method" value="X-ray"/>
    <property type="resolution" value="2.25 A"/>
    <property type="chains" value="A=1-352"/>
</dbReference>
<dbReference type="PDB" id="2IMW">
    <property type="method" value="X-ray"/>
    <property type="resolution" value="2.05 A"/>
    <property type="chains" value="P=1-348"/>
</dbReference>
<dbReference type="PDB" id="2J6S">
    <property type="method" value="X-ray"/>
    <property type="resolution" value="2.50 A"/>
    <property type="chains" value="A=1-352"/>
</dbReference>
<dbReference type="PDB" id="2J6T">
    <property type="method" value="X-ray"/>
    <property type="resolution" value="2.60 A"/>
    <property type="chains" value="A=1-352"/>
</dbReference>
<dbReference type="PDB" id="2J6U">
    <property type="method" value="X-ray"/>
    <property type="resolution" value="2.50 A"/>
    <property type="chains" value="A=1-352"/>
</dbReference>
<dbReference type="PDB" id="2JEF">
    <property type="method" value="X-ray"/>
    <property type="resolution" value="2.17 A"/>
    <property type="chains" value="A=1-352"/>
</dbReference>
<dbReference type="PDB" id="2JEG">
    <property type="method" value="X-ray"/>
    <property type="resolution" value="2.38 A"/>
    <property type="chains" value="A=1-352"/>
</dbReference>
<dbReference type="PDB" id="2JEI">
    <property type="method" value="X-ray"/>
    <property type="resolution" value="2.39 A"/>
    <property type="chains" value="A=1-352"/>
</dbReference>
<dbReference type="PDB" id="2JEJ">
    <property type="method" value="X-ray"/>
    <property type="resolution" value="1.86 A"/>
    <property type="chains" value="A=1-352"/>
</dbReference>
<dbReference type="PDB" id="2R8G">
    <property type="method" value="X-ray"/>
    <property type="resolution" value="2.70 A"/>
    <property type="chains" value="A=1-352"/>
</dbReference>
<dbReference type="PDB" id="2R8H">
    <property type="method" value="X-ray"/>
    <property type="resolution" value="2.48 A"/>
    <property type="chains" value="A=1-352"/>
</dbReference>
<dbReference type="PDB" id="2R8I">
    <property type="method" value="X-ray"/>
    <property type="resolution" value="2.38 A"/>
    <property type="chains" value="A=1-352"/>
</dbReference>
<dbReference type="PDB" id="2RDI">
    <property type="method" value="X-ray"/>
    <property type="resolution" value="1.92 A"/>
    <property type="chains" value="A=1-341"/>
</dbReference>
<dbReference type="PDB" id="2RDJ">
    <property type="method" value="X-ray"/>
    <property type="resolution" value="2.20 A"/>
    <property type="chains" value="A/B=1-352"/>
</dbReference>
<dbReference type="PDB" id="2UVR">
    <property type="method" value="X-ray"/>
    <property type="resolution" value="2.90 A"/>
    <property type="chains" value="A=1-352"/>
</dbReference>
<dbReference type="PDB" id="2UVU">
    <property type="method" value="X-ray"/>
    <property type="resolution" value="2.70 A"/>
    <property type="chains" value="A=1-352"/>
</dbReference>
<dbReference type="PDB" id="2UVV">
    <property type="method" value="X-ray"/>
    <property type="resolution" value="2.20 A"/>
    <property type="chains" value="A=1-352"/>
</dbReference>
<dbReference type="PDB" id="2UVW">
    <property type="method" value="X-ray"/>
    <property type="resolution" value="2.09 A"/>
    <property type="chains" value="A=1-352"/>
</dbReference>
<dbReference type="PDB" id="2V4Q">
    <property type="method" value="X-ray"/>
    <property type="resolution" value="2.60 A"/>
    <property type="chains" value="A=1-352"/>
</dbReference>
<dbReference type="PDB" id="2V4R">
    <property type="method" value="X-ray"/>
    <property type="resolution" value="2.50 A"/>
    <property type="chains" value="A=1-352"/>
</dbReference>
<dbReference type="PDB" id="2V9W">
    <property type="method" value="X-ray"/>
    <property type="resolution" value="3.00 A"/>
    <property type="chains" value="A/B=1-352"/>
</dbReference>
<dbReference type="PDB" id="2VA2">
    <property type="method" value="X-ray"/>
    <property type="resolution" value="2.80 A"/>
    <property type="chains" value="A/B=1-352"/>
</dbReference>
<dbReference type="PDB" id="2VA3">
    <property type="method" value="X-ray"/>
    <property type="resolution" value="2.98 A"/>
    <property type="chains" value="A=1-352"/>
</dbReference>
<dbReference type="PDB" id="2W8K">
    <property type="method" value="X-ray"/>
    <property type="resolution" value="3.10 A"/>
    <property type="chains" value="A=1-352"/>
</dbReference>
<dbReference type="PDB" id="2W8L">
    <property type="method" value="X-ray"/>
    <property type="resolution" value="3.00 A"/>
    <property type="chains" value="A=1-352"/>
</dbReference>
<dbReference type="PDB" id="2W9A">
    <property type="method" value="X-ray"/>
    <property type="resolution" value="2.60 A"/>
    <property type="chains" value="A=1-352"/>
</dbReference>
<dbReference type="PDB" id="2W9B">
    <property type="method" value="X-ray"/>
    <property type="resolution" value="2.28 A"/>
    <property type="chains" value="A/B=1-352"/>
</dbReference>
<dbReference type="PDB" id="2W9C">
    <property type="method" value="X-ray"/>
    <property type="resolution" value="2.87 A"/>
    <property type="chains" value="A/B=1-352"/>
</dbReference>
<dbReference type="PDB" id="2XC9">
    <property type="method" value="X-ray"/>
    <property type="resolution" value="2.20 A"/>
    <property type="chains" value="A=1-352"/>
</dbReference>
<dbReference type="PDB" id="2XCA">
    <property type="method" value="X-ray"/>
    <property type="resolution" value="2.50 A"/>
    <property type="chains" value="A=1-352"/>
</dbReference>
<dbReference type="PDB" id="2XCP">
    <property type="method" value="X-ray"/>
    <property type="resolution" value="2.60 A"/>
    <property type="chains" value="A/B=1-352"/>
</dbReference>
<dbReference type="PDB" id="3FDS">
    <property type="method" value="X-ray"/>
    <property type="resolution" value="2.05 A"/>
    <property type="chains" value="A=1-352"/>
</dbReference>
<dbReference type="PDB" id="3GII">
    <property type="method" value="X-ray"/>
    <property type="resolution" value="2.60 A"/>
    <property type="chains" value="A=2-341"/>
</dbReference>
<dbReference type="PDB" id="3GIJ">
    <property type="method" value="X-ray"/>
    <property type="resolution" value="2.40 A"/>
    <property type="chains" value="A/B=2-341"/>
</dbReference>
<dbReference type="PDB" id="3GIK">
    <property type="method" value="X-ray"/>
    <property type="resolution" value="2.90 A"/>
    <property type="chains" value="A=2-341"/>
</dbReference>
<dbReference type="PDB" id="3GIL">
    <property type="method" value="X-ray"/>
    <property type="resolution" value="2.71 A"/>
    <property type="chains" value="A/B=2-341"/>
</dbReference>
<dbReference type="PDB" id="3GIM">
    <property type="method" value="X-ray"/>
    <property type="resolution" value="2.70 A"/>
    <property type="chains" value="A=2-341"/>
</dbReference>
<dbReference type="PDB" id="3KHG">
    <property type="method" value="X-ray"/>
    <property type="resolution" value="2.96 A"/>
    <property type="chains" value="A/B=2-341"/>
</dbReference>
<dbReference type="PDB" id="3KHH">
    <property type="method" value="X-ray"/>
    <property type="resolution" value="2.70 A"/>
    <property type="chains" value="A/B=2-341"/>
</dbReference>
<dbReference type="PDB" id="3KHL">
    <property type="method" value="X-ray"/>
    <property type="resolution" value="2.10 A"/>
    <property type="chains" value="A/B=2-341"/>
</dbReference>
<dbReference type="PDB" id="3KHR">
    <property type="method" value="X-ray"/>
    <property type="resolution" value="2.01 A"/>
    <property type="chains" value="A/B=2-341"/>
</dbReference>
<dbReference type="PDB" id="3M9M">
    <property type="method" value="X-ray"/>
    <property type="resolution" value="2.90 A"/>
    <property type="chains" value="B=1-352"/>
</dbReference>
<dbReference type="PDB" id="3M9N">
    <property type="method" value="X-ray"/>
    <property type="resolution" value="1.93 A"/>
    <property type="chains" value="B=1-352"/>
</dbReference>
<dbReference type="PDB" id="3M9O">
    <property type="method" value="X-ray"/>
    <property type="resolution" value="2.00 A"/>
    <property type="chains" value="B=1-352"/>
</dbReference>
<dbReference type="PDB" id="3PR4">
    <property type="method" value="X-ray"/>
    <property type="resolution" value="2.65 A"/>
    <property type="chains" value="A=1-341"/>
</dbReference>
<dbReference type="PDB" id="3PR5">
    <property type="method" value="X-ray"/>
    <property type="resolution" value="2.40 A"/>
    <property type="chains" value="B=1-341"/>
</dbReference>
<dbReference type="PDB" id="3PVX">
    <property type="method" value="X-ray"/>
    <property type="resolution" value="3.03 A"/>
    <property type="chains" value="A=1-341"/>
</dbReference>
<dbReference type="PDB" id="3PW0">
    <property type="method" value="X-ray"/>
    <property type="resolution" value="2.91 A"/>
    <property type="chains" value="A=1-341"/>
</dbReference>
<dbReference type="PDB" id="3PW2">
    <property type="method" value="X-ray"/>
    <property type="resolution" value="2.74 A"/>
    <property type="chains" value="A=1-341"/>
</dbReference>
<dbReference type="PDB" id="3PW4">
    <property type="method" value="X-ray"/>
    <property type="resolution" value="2.90 A"/>
    <property type="chains" value="A=1-341"/>
</dbReference>
<dbReference type="PDB" id="3PW5">
    <property type="method" value="X-ray"/>
    <property type="resolution" value="3.00 A"/>
    <property type="chains" value="A=1-341"/>
</dbReference>
<dbReference type="PDB" id="3PW7">
    <property type="method" value="X-ray"/>
    <property type="resolution" value="2.90 A"/>
    <property type="chains" value="A/E=1-341"/>
</dbReference>
<dbReference type="PDB" id="3QZ7">
    <property type="method" value="X-ray"/>
    <property type="resolution" value="2.00 A"/>
    <property type="chains" value="A=1-352"/>
</dbReference>
<dbReference type="PDB" id="3QZ8">
    <property type="method" value="X-ray"/>
    <property type="resolution" value="2.00 A"/>
    <property type="chains" value="A=1-352"/>
</dbReference>
<dbReference type="PDB" id="3RAQ">
    <property type="method" value="X-ray"/>
    <property type="resolution" value="2.25 A"/>
    <property type="chains" value="A/B=2-341"/>
</dbReference>
<dbReference type="PDB" id="3RAX">
    <property type="method" value="X-ray"/>
    <property type="resolution" value="1.89 A"/>
    <property type="chains" value="A/B=2-341"/>
</dbReference>
<dbReference type="PDB" id="3RB0">
    <property type="method" value="X-ray"/>
    <property type="resolution" value="3.22 A"/>
    <property type="chains" value="A/B=2-341"/>
</dbReference>
<dbReference type="PDB" id="3RB3">
    <property type="method" value="X-ray"/>
    <property type="resolution" value="2.80 A"/>
    <property type="chains" value="A=2-341"/>
</dbReference>
<dbReference type="PDB" id="3RB4">
    <property type="method" value="X-ray"/>
    <property type="resolution" value="2.80 A"/>
    <property type="chains" value="A/B=2-341"/>
</dbReference>
<dbReference type="PDB" id="3RB6">
    <property type="method" value="X-ray"/>
    <property type="resolution" value="2.70 A"/>
    <property type="chains" value="A/B=2-341"/>
</dbReference>
<dbReference type="PDB" id="3RBD">
    <property type="method" value="X-ray"/>
    <property type="resolution" value="2.50 A"/>
    <property type="chains" value="A/B=2-341"/>
</dbReference>
<dbReference type="PDB" id="3RBE">
    <property type="method" value="X-ray"/>
    <property type="resolution" value="2.80 A"/>
    <property type="chains" value="A/B=2-341"/>
</dbReference>
<dbReference type="PDB" id="3T5H">
    <property type="method" value="X-ray"/>
    <property type="resolution" value="2.35 A"/>
    <property type="chains" value="A=1-341"/>
</dbReference>
<dbReference type="PDB" id="3T5J">
    <property type="method" value="X-ray"/>
    <property type="resolution" value="2.40 A"/>
    <property type="chains" value="A=1-341"/>
</dbReference>
<dbReference type="PDB" id="3T5K">
    <property type="method" value="X-ray"/>
    <property type="resolution" value="2.90 A"/>
    <property type="chains" value="A=1-341"/>
</dbReference>
<dbReference type="PDB" id="3T5L">
    <property type="method" value="X-ray"/>
    <property type="resolution" value="2.90 A"/>
    <property type="chains" value="A=1-341"/>
</dbReference>
<dbReference type="PDB" id="3V6H">
    <property type="method" value="X-ray"/>
    <property type="resolution" value="2.30 A"/>
    <property type="chains" value="A/B=1-342"/>
</dbReference>
<dbReference type="PDB" id="3V6J">
    <property type="method" value="X-ray"/>
    <property type="resolution" value="2.30 A"/>
    <property type="chains" value="A/J=1-342"/>
</dbReference>
<dbReference type="PDB" id="3V6K">
    <property type="method" value="X-ray"/>
    <property type="resolution" value="3.60 A"/>
    <property type="chains" value="A/J=1-342"/>
</dbReference>
<dbReference type="PDB" id="4F4W">
    <property type="method" value="X-ray"/>
    <property type="resolution" value="1.90 A"/>
    <property type="chains" value="A/B=231-352"/>
</dbReference>
<dbReference type="PDB" id="4F4X">
    <property type="method" value="X-ray"/>
    <property type="resolution" value="2.05 A"/>
    <property type="chains" value="A=231-352"/>
</dbReference>
<dbReference type="PDB" id="4F4Y">
    <property type="method" value="X-ray"/>
    <property type="resolution" value="2.34 A"/>
    <property type="chains" value="A/B=5-143, A/B=231-247"/>
</dbReference>
<dbReference type="PDB" id="4F4Z">
    <property type="method" value="X-ray"/>
    <property type="resolution" value="2.30 A"/>
    <property type="chains" value="A/B=1-246"/>
</dbReference>
<dbReference type="PDB" id="4F50">
    <property type="method" value="X-ray"/>
    <property type="resolution" value="2.22 A"/>
    <property type="chains" value="A=246-352"/>
</dbReference>
<dbReference type="PDB" id="4FBT">
    <property type="method" value="X-ray"/>
    <property type="resolution" value="2.00 A"/>
    <property type="chains" value="A=1-341"/>
</dbReference>
<dbReference type="PDB" id="4FBU">
    <property type="method" value="X-ray"/>
    <property type="resolution" value="2.60 A"/>
    <property type="chains" value="A/B=1-341"/>
</dbReference>
<dbReference type="PDB" id="4G3I">
    <property type="method" value="X-ray"/>
    <property type="resolution" value="2.50 A"/>
    <property type="chains" value="A/B=1-341"/>
</dbReference>
<dbReference type="PDB" id="4GC6">
    <property type="method" value="X-ray"/>
    <property type="resolution" value="2.90 A"/>
    <property type="chains" value="A=1-352"/>
</dbReference>
<dbReference type="PDB" id="4GC7">
    <property type="method" value="X-ray"/>
    <property type="resolution" value="2.89 A"/>
    <property type="chains" value="A/B=1-352"/>
</dbReference>
<dbReference type="PDB" id="4JUZ">
    <property type="method" value="X-ray"/>
    <property type="resolution" value="2.65 A"/>
    <property type="chains" value="A=1-341"/>
</dbReference>
<dbReference type="PDB" id="4JV0">
    <property type="method" value="X-ray"/>
    <property type="resolution" value="2.95 A"/>
    <property type="chains" value="A=1-341"/>
</dbReference>
<dbReference type="PDB" id="4JV1">
    <property type="method" value="X-ray"/>
    <property type="resolution" value="2.30 A"/>
    <property type="chains" value="A=1-341"/>
</dbReference>
<dbReference type="PDB" id="4JV2">
    <property type="method" value="X-ray"/>
    <property type="resolution" value="2.74 A"/>
    <property type="chains" value="A=1-341"/>
</dbReference>
<dbReference type="PDB" id="4QW8">
    <property type="method" value="X-ray"/>
    <property type="resolution" value="2.29 A"/>
    <property type="chains" value="A=1-341"/>
</dbReference>
<dbReference type="PDB" id="4QW9">
    <property type="method" value="X-ray"/>
    <property type="resolution" value="2.40 A"/>
    <property type="chains" value="A=1-341"/>
</dbReference>
<dbReference type="PDB" id="4QWA">
    <property type="method" value="X-ray"/>
    <property type="resolution" value="2.20 A"/>
    <property type="chains" value="A=1-341"/>
</dbReference>
<dbReference type="PDB" id="4QWB">
    <property type="method" value="X-ray"/>
    <property type="resolution" value="1.80 A"/>
    <property type="chains" value="A=1-343"/>
</dbReference>
<dbReference type="PDB" id="4QWC">
    <property type="method" value="X-ray"/>
    <property type="resolution" value="2.40 A"/>
    <property type="chains" value="A/D=1-342"/>
</dbReference>
<dbReference type="PDB" id="4QWD">
    <property type="method" value="X-ray"/>
    <property type="resolution" value="2.05 A"/>
    <property type="chains" value="A=1-341"/>
</dbReference>
<dbReference type="PDB" id="4QWE">
    <property type="method" value="X-ray"/>
    <property type="resolution" value="2.20 A"/>
    <property type="chains" value="A=1-341"/>
</dbReference>
<dbReference type="PDB" id="4RUA">
    <property type="method" value="X-ray"/>
    <property type="resolution" value="3.07 A"/>
    <property type="chains" value="A=1-341"/>
</dbReference>
<dbReference type="PDB" id="4RUC">
    <property type="method" value="X-ray"/>
    <property type="resolution" value="2.90 A"/>
    <property type="chains" value="A=1-341"/>
</dbReference>
<dbReference type="PDB" id="4RZR">
    <property type="method" value="X-ray"/>
    <property type="resolution" value="2.20 A"/>
    <property type="chains" value="A/D=1-352"/>
</dbReference>
<dbReference type="PDB" id="4TQR">
    <property type="method" value="X-ray"/>
    <property type="resolution" value="1.58 A"/>
    <property type="chains" value="A=1-342"/>
</dbReference>
<dbReference type="PDB" id="4TQS">
    <property type="method" value="X-ray"/>
    <property type="resolution" value="2.06 A"/>
    <property type="chains" value="A/B=1-352"/>
</dbReference>
<dbReference type="PDB" id="5EDW">
    <property type="method" value="X-ray"/>
    <property type="resolution" value="2.62 A"/>
    <property type="chains" value="A=1-341"/>
</dbReference>
<dbReference type="PDB" id="6L84">
    <property type="method" value="X-ray"/>
    <property type="resolution" value="2.60 A"/>
    <property type="chains" value="A=1-352"/>
</dbReference>
<dbReference type="PDB" id="6L97">
    <property type="method" value="X-ray"/>
    <property type="resolution" value="2.36 A"/>
    <property type="chains" value="A/B=1-352"/>
</dbReference>
<dbReference type="PDB" id="6VG6">
    <property type="method" value="X-ray"/>
    <property type="resolution" value="3.08 A"/>
    <property type="chains" value="A/D=1-341"/>
</dbReference>
<dbReference type="PDB" id="6VGM">
    <property type="method" value="X-ray"/>
    <property type="resolution" value="2.84 A"/>
    <property type="chains" value="A/D=1-341"/>
</dbReference>
<dbReference type="PDB" id="6VKP">
    <property type="method" value="X-ray"/>
    <property type="resolution" value="2.54 A"/>
    <property type="chains" value="A/D=1-341"/>
</dbReference>
<dbReference type="PDB" id="6VNP">
    <property type="method" value="X-ray"/>
    <property type="resolution" value="2.42 A"/>
    <property type="chains" value="A/D/G/J=1-341"/>
</dbReference>
<dbReference type="PDB" id="7KLE">
    <property type="method" value="X-ray"/>
    <property type="resolution" value="3.00 A"/>
    <property type="chains" value="A=1-341"/>
</dbReference>
<dbReference type="PDB" id="7KLF">
    <property type="method" value="X-ray"/>
    <property type="resolution" value="2.30 A"/>
    <property type="chains" value="A=1-341"/>
</dbReference>
<dbReference type="PDBsum" id="1JX4"/>
<dbReference type="PDBsum" id="1JXL"/>
<dbReference type="PDBsum" id="1N48"/>
<dbReference type="PDBsum" id="1N56"/>
<dbReference type="PDBsum" id="1RYR"/>
<dbReference type="PDBsum" id="1RYS"/>
<dbReference type="PDBsum" id="1S0M"/>
<dbReference type="PDBsum" id="1S0N"/>
<dbReference type="PDBsum" id="1S0O"/>
<dbReference type="PDBsum" id="1S10"/>
<dbReference type="PDBsum" id="1S97"/>
<dbReference type="PDBsum" id="1S9F"/>
<dbReference type="PDBsum" id="2AGO"/>
<dbReference type="PDBsum" id="2AGP"/>
<dbReference type="PDBsum" id="2AGQ"/>
<dbReference type="PDBsum" id="2ASD"/>
<dbReference type="PDBsum" id="2ASJ"/>
<dbReference type="PDBsum" id="2ASL"/>
<dbReference type="PDBsum" id="2ATL"/>
<dbReference type="PDBsum" id="2AU0"/>
<dbReference type="PDBsum" id="2BQ3"/>
<dbReference type="PDBsum" id="2BQR"/>
<dbReference type="PDBsum" id="2BQU"/>
<dbReference type="PDBsum" id="2BR0"/>
<dbReference type="PDBsum" id="2C22"/>
<dbReference type="PDBsum" id="2C28"/>
<dbReference type="PDBsum" id="2C2D"/>
<dbReference type="PDBsum" id="2C2E"/>
<dbReference type="PDBsum" id="2C2R"/>
<dbReference type="PDBsum" id="2IA6"/>
<dbReference type="PDBsum" id="2IBK"/>
<dbReference type="PDBsum" id="2IMW"/>
<dbReference type="PDBsum" id="2J6S"/>
<dbReference type="PDBsum" id="2J6T"/>
<dbReference type="PDBsum" id="2J6U"/>
<dbReference type="PDBsum" id="2JEF"/>
<dbReference type="PDBsum" id="2JEG"/>
<dbReference type="PDBsum" id="2JEI"/>
<dbReference type="PDBsum" id="2JEJ"/>
<dbReference type="PDBsum" id="2R8G"/>
<dbReference type="PDBsum" id="2R8H"/>
<dbReference type="PDBsum" id="2R8I"/>
<dbReference type="PDBsum" id="2RDI"/>
<dbReference type="PDBsum" id="2RDJ"/>
<dbReference type="PDBsum" id="2UVR"/>
<dbReference type="PDBsum" id="2UVU"/>
<dbReference type="PDBsum" id="2UVV"/>
<dbReference type="PDBsum" id="2UVW"/>
<dbReference type="PDBsum" id="2V4Q"/>
<dbReference type="PDBsum" id="2V4R"/>
<dbReference type="PDBsum" id="2V9W"/>
<dbReference type="PDBsum" id="2VA2"/>
<dbReference type="PDBsum" id="2VA3"/>
<dbReference type="PDBsum" id="2W8K"/>
<dbReference type="PDBsum" id="2W8L"/>
<dbReference type="PDBsum" id="2W9A"/>
<dbReference type="PDBsum" id="2W9B"/>
<dbReference type="PDBsum" id="2W9C"/>
<dbReference type="PDBsum" id="2XC9"/>
<dbReference type="PDBsum" id="2XCA"/>
<dbReference type="PDBsum" id="2XCP"/>
<dbReference type="PDBsum" id="3FDS"/>
<dbReference type="PDBsum" id="3GII"/>
<dbReference type="PDBsum" id="3GIJ"/>
<dbReference type="PDBsum" id="3GIK"/>
<dbReference type="PDBsum" id="3GIL"/>
<dbReference type="PDBsum" id="3GIM"/>
<dbReference type="PDBsum" id="3KHG"/>
<dbReference type="PDBsum" id="3KHH"/>
<dbReference type="PDBsum" id="3KHL"/>
<dbReference type="PDBsum" id="3KHR"/>
<dbReference type="PDBsum" id="3M9M"/>
<dbReference type="PDBsum" id="3M9N"/>
<dbReference type="PDBsum" id="3M9O"/>
<dbReference type="PDBsum" id="3PR4"/>
<dbReference type="PDBsum" id="3PR5"/>
<dbReference type="PDBsum" id="3PVX"/>
<dbReference type="PDBsum" id="3PW0"/>
<dbReference type="PDBsum" id="3PW2"/>
<dbReference type="PDBsum" id="3PW4"/>
<dbReference type="PDBsum" id="3PW5"/>
<dbReference type="PDBsum" id="3PW7"/>
<dbReference type="PDBsum" id="3QZ7"/>
<dbReference type="PDBsum" id="3QZ8"/>
<dbReference type="PDBsum" id="3RAQ"/>
<dbReference type="PDBsum" id="3RAX"/>
<dbReference type="PDBsum" id="3RB0"/>
<dbReference type="PDBsum" id="3RB3"/>
<dbReference type="PDBsum" id="3RB4"/>
<dbReference type="PDBsum" id="3RB6"/>
<dbReference type="PDBsum" id="3RBD"/>
<dbReference type="PDBsum" id="3RBE"/>
<dbReference type="PDBsum" id="3T5H"/>
<dbReference type="PDBsum" id="3T5J"/>
<dbReference type="PDBsum" id="3T5K"/>
<dbReference type="PDBsum" id="3T5L"/>
<dbReference type="PDBsum" id="3V6H"/>
<dbReference type="PDBsum" id="3V6J"/>
<dbReference type="PDBsum" id="3V6K"/>
<dbReference type="PDBsum" id="4F4W"/>
<dbReference type="PDBsum" id="4F4X"/>
<dbReference type="PDBsum" id="4F4Y"/>
<dbReference type="PDBsum" id="4F4Z"/>
<dbReference type="PDBsum" id="4F50"/>
<dbReference type="PDBsum" id="4FBT"/>
<dbReference type="PDBsum" id="4FBU"/>
<dbReference type="PDBsum" id="4G3I"/>
<dbReference type="PDBsum" id="4GC6"/>
<dbReference type="PDBsum" id="4GC7"/>
<dbReference type="PDBsum" id="4JUZ"/>
<dbReference type="PDBsum" id="4JV0"/>
<dbReference type="PDBsum" id="4JV1"/>
<dbReference type="PDBsum" id="4JV2"/>
<dbReference type="PDBsum" id="4QW8"/>
<dbReference type="PDBsum" id="4QW9"/>
<dbReference type="PDBsum" id="4QWA"/>
<dbReference type="PDBsum" id="4QWB"/>
<dbReference type="PDBsum" id="4QWC"/>
<dbReference type="PDBsum" id="4QWD"/>
<dbReference type="PDBsum" id="4QWE"/>
<dbReference type="PDBsum" id="4RUA"/>
<dbReference type="PDBsum" id="4RUC"/>
<dbReference type="PDBsum" id="4RZR"/>
<dbReference type="PDBsum" id="4TQR"/>
<dbReference type="PDBsum" id="4TQS"/>
<dbReference type="PDBsum" id="5EDW"/>
<dbReference type="PDBsum" id="6L84"/>
<dbReference type="PDBsum" id="6L97"/>
<dbReference type="PDBsum" id="6VG6"/>
<dbReference type="PDBsum" id="6VGM"/>
<dbReference type="PDBsum" id="6VKP"/>
<dbReference type="PDBsum" id="6VNP"/>
<dbReference type="PDBsum" id="7KLE"/>
<dbReference type="PDBsum" id="7KLF"/>
<dbReference type="BMRB" id="Q97W02"/>
<dbReference type="SMR" id="Q97W02"/>
<dbReference type="DIP" id="DIP-48855N"/>
<dbReference type="FunCoup" id="Q97W02">
    <property type="interactions" value="197"/>
</dbReference>
<dbReference type="IntAct" id="Q97W02">
    <property type="interactions" value="1"/>
</dbReference>
<dbReference type="STRING" id="273057.SSO2448"/>
<dbReference type="PaxDb" id="273057-SSO2448"/>
<dbReference type="EnsemblBacteria" id="AAK42588">
    <property type="protein sequence ID" value="AAK42588"/>
    <property type="gene ID" value="SSO2448"/>
</dbReference>
<dbReference type="KEGG" id="sso:SSO2448"/>
<dbReference type="PATRIC" id="fig|273057.12.peg.2526"/>
<dbReference type="eggNOG" id="arCOG04582">
    <property type="taxonomic scope" value="Archaea"/>
</dbReference>
<dbReference type="HOGENOM" id="CLU_012348_1_2_2"/>
<dbReference type="InParanoid" id="Q97W02"/>
<dbReference type="PhylomeDB" id="Q97W02"/>
<dbReference type="BRENDA" id="2.7.7.7">
    <property type="organism ID" value="6163"/>
</dbReference>
<dbReference type="EvolutionaryTrace" id="Q97W02"/>
<dbReference type="Proteomes" id="UP000001974">
    <property type="component" value="Chromosome"/>
</dbReference>
<dbReference type="GO" id="GO:0005737">
    <property type="term" value="C:cytoplasm"/>
    <property type="evidence" value="ECO:0007669"/>
    <property type="project" value="UniProtKB-SubCell"/>
</dbReference>
<dbReference type="GO" id="GO:0003684">
    <property type="term" value="F:damaged DNA binding"/>
    <property type="evidence" value="ECO:0007669"/>
    <property type="project" value="InterPro"/>
</dbReference>
<dbReference type="GO" id="GO:0003887">
    <property type="term" value="F:DNA-directed DNA polymerase activity"/>
    <property type="evidence" value="ECO:0000318"/>
    <property type="project" value="GO_Central"/>
</dbReference>
<dbReference type="GO" id="GO:0000287">
    <property type="term" value="F:magnesium ion binding"/>
    <property type="evidence" value="ECO:0007669"/>
    <property type="project" value="UniProtKB-UniRule"/>
</dbReference>
<dbReference type="GO" id="GO:0006261">
    <property type="term" value="P:DNA-templated DNA replication"/>
    <property type="evidence" value="ECO:0007669"/>
    <property type="project" value="UniProtKB-UniRule"/>
</dbReference>
<dbReference type="GO" id="GO:0042276">
    <property type="term" value="P:error-prone translesion synthesis"/>
    <property type="evidence" value="ECO:0000318"/>
    <property type="project" value="GO_Central"/>
</dbReference>
<dbReference type="CDD" id="cd03586">
    <property type="entry name" value="PolY_Pol_IV_kappa"/>
    <property type="match status" value="1"/>
</dbReference>
<dbReference type="FunFam" id="3.30.70.270:FF:000061">
    <property type="entry name" value="DNA polymerase IV"/>
    <property type="match status" value="1"/>
</dbReference>
<dbReference type="FunFam" id="3.40.1170.60:FF:000009">
    <property type="entry name" value="DNA polymerase IV"/>
    <property type="match status" value="1"/>
</dbReference>
<dbReference type="Gene3D" id="3.30.70.270">
    <property type="match status" value="1"/>
</dbReference>
<dbReference type="Gene3D" id="3.40.1170.60">
    <property type="match status" value="1"/>
</dbReference>
<dbReference type="Gene3D" id="1.10.150.20">
    <property type="entry name" value="5' to 3' exonuclease, C-terminal subdomain"/>
    <property type="match status" value="1"/>
</dbReference>
<dbReference type="Gene3D" id="3.30.1490.100">
    <property type="entry name" value="DNA polymerase, Y-family, little finger domain"/>
    <property type="match status" value="1"/>
</dbReference>
<dbReference type="HAMAP" id="MF_01113">
    <property type="entry name" value="DNApol_IV"/>
    <property type="match status" value="1"/>
</dbReference>
<dbReference type="InterPro" id="IPR043502">
    <property type="entry name" value="DNA/RNA_pol_sf"/>
</dbReference>
<dbReference type="InterPro" id="IPR036775">
    <property type="entry name" value="DNA_pol_Y-fam_lit_finger_sf"/>
</dbReference>
<dbReference type="InterPro" id="IPR017961">
    <property type="entry name" value="DNA_pol_Y-fam_little_finger"/>
</dbReference>
<dbReference type="InterPro" id="IPR050116">
    <property type="entry name" value="DNA_polymerase-Y"/>
</dbReference>
<dbReference type="InterPro" id="IPR022880">
    <property type="entry name" value="DNApol_IV"/>
</dbReference>
<dbReference type="InterPro" id="IPR024728">
    <property type="entry name" value="PolY_HhH_motif"/>
</dbReference>
<dbReference type="InterPro" id="IPR043128">
    <property type="entry name" value="Rev_trsase/Diguanyl_cyclase"/>
</dbReference>
<dbReference type="InterPro" id="IPR001126">
    <property type="entry name" value="UmuC"/>
</dbReference>
<dbReference type="NCBIfam" id="NF002292">
    <property type="entry name" value="PRK01216.1"/>
    <property type="match status" value="1"/>
</dbReference>
<dbReference type="PANTHER" id="PTHR11076:SF33">
    <property type="entry name" value="DNA POLYMERASE KAPPA"/>
    <property type="match status" value="1"/>
</dbReference>
<dbReference type="PANTHER" id="PTHR11076">
    <property type="entry name" value="DNA REPAIR POLYMERASE UMUC / TRANSFERASE FAMILY MEMBER"/>
    <property type="match status" value="1"/>
</dbReference>
<dbReference type="Pfam" id="PF00817">
    <property type="entry name" value="IMS"/>
    <property type="match status" value="1"/>
</dbReference>
<dbReference type="Pfam" id="PF11799">
    <property type="entry name" value="IMS_C"/>
    <property type="match status" value="1"/>
</dbReference>
<dbReference type="Pfam" id="PF11798">
    <property type="entry name" value="IMS_HHH"/>
    <property type="match status" value="1"/>
</dbReference>
<dbReference type="SUPFAM" id="SSF56672">
    <property type="entry name" value="DNA/RNA polymerases"/>
    <property type="match status" value="1"/>
</dbReference>
<dbReference type="SUPFAM" id="SSF100879">
    <property type="entry name" value="Lesion bypass DNA polymerase (Y-family), little finger domain"/>
    <property type="match status" value="1"/>
</dbReference>
<dbReference type="PROSITE" id="PS50173">
    <property type="entry name" value="UMUC"/>
    <property type="match status" value="1"/>
</dbReference>
<organism>
    <name type="scientific">Saccharolobus solfataricus (strain ATCC 35092 / DSM 1617 / JCM 11322 / P2)</name>
    <name type="common">Sulfolobus solfataricus</name>
    <dbReference type="NCBI Taxonomy" id="273057"/>
    <lineage>
        <taxon>Archaea</taxon>
        <taxon>Thermoproteota</taxon>
        <taxon>Thermoprotei</taxon>
        <taxon>Sulfolobales</taxon>
        <taxon>Sulfolobaceae</taxon>
        <taxon>Saccharolobus</taxon>
    </lineage>
</organism>
<feature type="chain" id="PRO_0000173976" description="DNA polymerase IV">
    <location>
        <begin position="1"/>
        <end position="352"/>
    </location>
</feature>
<feature type="domain" description="UmuC">
    <location>
        <begin position="3"/>
        <end position="187"/>
    </location>
</feature>
<feature type="active site">
    <location>
        <position position="106"/>
    </location>
</feature>
<feature type="binding site">
    <location>
        <position position="7"/>
    </location>
    <ligand>
        <name>Mg(2+)</name>
        <dbReference type="ChEBI" id="CHEBI:18420"/>
    </ligand>
</feature>
<feature type="binding site">
    <location>
        <position position="105"/>
    </location>
    <ligand>
        <name>Mg(2+)</name>
        <dbReference type="ChEBI" id="CHEBI:18420"/>
    </ligand>
</feature>
<feature type="site" description="Substrate discrimination">
    <location>
        <position position="12"/>
    </location>
</feature>
<feature type="mutagenesis site" description="Loss of function." evidence="1">
    <original>DE</original>
    <variation>AA</variation>
    <location>
        <begin position="105"/>
        <end position="106"/>
    </location>
</feature>
<feature type="mutagenesis site" description="Almost complete loss of interaction with PCNA." evidence="2">
    <location>
        <begin position="342"/>
        <end position="352"/>
    </location>
</feature>
<feature type="strand" evidence="11">
    <location>
        <begin position="3"/>
        <end position="8"/>
    </location>
</feature>
<feature type="helix" evidence="11">
    <location>
        <begin position="11"/>
        <end position="19"/>
    </location>
</feature>
<feature type="helix" evidence="11">
    <location>
        <begin position="21"/>
        <end position="23"/>
    </location>
</feature>
<feature type="strand" evidence="12">
    <location>
        <begin position="24"/>
        <end position="26"/>
    </location>
</feature>
<feature type="strand" evidence="11">
    <location>
        <begin position="28"/>
        <end position="32"/>
    </location>
</feature>
<feature type="strand" evidence="4">
    <location>
        <begin position="35"/>
        <end position="37"/>
    </location>
</feature>
<feature type="turn" evidence="8">
    <location>
        <begin position="38"/>
        <end position="40"/>
    </location>
</feature>
<feature type="strand" evidence="11">
    <location>
        <begin position="42"/>
        <end position="46"/>
    </location>
</feature>
<feature type="helix" evidence="11">
    <location>
        <begin position="48"/>
        <end position="51"/>
    </location>
</feature>
<feature type="turn" evidence="11">
    <location>
        <begin position="52"/>
        <end position="54"/>
    </location>
</feature>
<feature type="strand" evidence="7">
    <location>
        <begin position="57"/>
        <end position="59"/>
    </location>
</feature>
<feature type="helix" evidence="11">
    <location>
        <begin position="61"/>
        <end position="67"/>
    </location>
</feature>
<feature type="strand" evidence="11">
    <location>
        <begin position="71"/>
        <end position="75"/>
    </location>
</feature>
<feature type="helix" evidence="11">
    <location>
        <begin position="78"/>
        <end position="93"/>
    </location>
</feature>
<feature type="strand" evidence="11">
    <location>
        <begin position="99"/>
        <end position="103"/>
    </location>
</feature>
<feature type="strand" evidence="11">
    <location>
        <begin position="106"/>
        <end position="110"/>
    </location>
</feature>
<feature type="turn" evidence="11">
    <location>
        <begin position="112"/>
        <end position="114"/>
    </location>
</feature>
<feature type="strand" evidence="10">
    <location>
        <begin position="115"/>
        <end position="117"/>
    </location>
</feature>
<feature type="helix" evidence="11">
    <location>
        <begin position="118"/>
        <end position="136"/>
    </location>
</feature>
<feature type="strand" evidence="11">
    <location>
        <begin position="140"/>
        <end position="147"/>
    </location>
</feature>
<feature type="helix" evidence="11">
    <location>
        <begin position="148"/>
        <end position="158"/>
    </location>
</feature>
<feature type="turn" evidence="9">
    <location>
        <begin position="159"/>
        <end position="161"/>
    </location>
</feature>
<feature type="strand" evidence="11">
    <location>
        <begin position="163"/>
        <end position="165"/>
    </location>
</feature>
<feature type="helix" evidence="11">
    <location>
        <begin position="168"/>
        <end position="177"/>
    </location>
</feature>
<feature type="helix" evidence="11">
    <location>
        <begin position="180"/>
        <end position="182"/>
    </location>
</feature>
<feature type="helix" evidence="11">
    <location>
        <begin position="188"/>
        <end position="194"/>
    </location>
</feature>
<feature type="turn" evidence="4">
    <location>
        <begin position="196"/>
        <end position="198"/>
    </location>
</feature>
<feature type="helix" evidence="4">
    <location>
        <begin position="202"/>
        <end position="206"/>
    </location>
</feature>
<feature type="helix" evidence="11">
    <location>
        <begin position="212"/>
        <end position="215"/>
    </location>
</feature>
<feature type="helix" evidence="11">
    <location>
        <begin position="219"/>
        <end position="229"/>
    </location>
</feature>
<feature type="strand" evidence="11">
    <location>
        <begin position="243"/>
        <end position="255"/>
    </location>
</feature>
<feature type="helix" evidence="11">
    <location>
        <begin position="258"/>
        <end position="276"/>
    </location>
</feature>
<feature type="strand" evidence="11">
    <location>
        <begin position="281"/>
        <end position="290"/>
    </location>
</feature>
<feature type="turn" evidence="6">
    <location>
        <begin position="291"/>
        <end position="293"/>
    </location>
</feature>
<feature type="strand" evidence="11">
    <location>
        <begin position="295"/>
        <end position="301"/>
    </location>
</feature>
<feature type="helix" evidence="11">
    <location>
        <begin position="308"/>
        <end position="325"/>
    </location>
</feature>
<feature type="strand" evidence="11">
    <location>
        <begin position="330"/>
        <end position="340"/>
    </location>
</feature>
<feature type="strand" evidence="5">
    <location>
        <begin position="343"/>
        <end position="346"/>
    </location>
</feature>
<gene>
    <name type="primary">dbh</name>
    <name type="synonym">dpo4</name>
    <name type="ordered locus">SSO2448</name>
</gene>
<keyword id="KW-0002">3D-structure</keyword>
<keyword id="KW-0963">Cytoplasm</keyword>
<keyword id="KW-0227">DNA damage</keyword>
<keyword id="KW-0234">DNA repair</keyword>
<keyword id="KW-0235">DNA replication</keyword>
<keyword id="KW-0238">DNA-binding</keyword>
<keyword id="KW-0239">DNA-directed DNA polymerase</keyword>
<keyword id="KW-0460">Magnesium</keyword>
<keyword id="KW-0479">Metal-binding</keyword>
<keyword id="KW-0515">Mutator protein</keyword>
<keyword id="KW-0548">Nucleotidyltransferase</keyword>
<keyword id="KW-1185">Reference proteome</keyword>
<keyword id="KW-0808">Transferase</keyword>
<name>DPO4_SACS2</name>
<evidence type="ECO:0000269" key="1">
    <source>
    </source>
</evidence>
<evidence type="ECO:0000269" key="2">
    <source>
    </source>
</evidence>
<evidence type="ECO:0000305" key="3"/>
<evidence type="ECO:0007829" key="4">
    <source>
        <dbReference type="PDB" id="1JX4"/>
    </source>
</evidence>
<evidence type="ECO:0007829" key="5">
    <source>
        <dbReference type="PDB" id="2IMW"/>
    </source>
</evidence>
<evidence type="ECO:0007829" key="6">
    <source>
        <dbReference type="PDB" id="2J6S"/>
    </source>
</evidence>
<evidence type="ECO:0007829" key="7">
    <source>
        <dbReference type="PDB" id="2W9B"/>
    </source>
</evidence>
<evidence type="ECO:0007829" key="8">
    <source>
        <dbReference type="PDB" id="3KHH"/>
    </source>
</evidence>
<evidence type="ECO:0007829" key="9">
    <source>
        <dbReference type="PDB" id="4GC7"/>
    </source>
</evidence>
<evidence type="ECO:0007829" key="10">
    <source>
        <dbReference type="PDB" id="4QWC"/>
    </source>
</evidence>
<evidence type="ECO:0007829" key="11">
    <source>
        <dbReference type="PDB" id="4TQR"/>
    </source>
</evidence>
<evidence type="ECO:0007829" key="12">
    <source>
        <dbReference type="PDB" id="6L97"/>
    </source>
</evidence>